<comment type="function">
    <text evidence="1">Usually encoded in the trnK tRNA gene intron. Probably assists in splicing its own and other chloroplast group II introns.</text>
</comment>
<comment type="subcellular location">
    <subcellularLocation>
        <location>Plastid</location>
        <location>Chloroplast</location>
    </subcellularLocation>
</comment>
<comment type="similarity">
    <text evidence="1">Belongs to the intron maturase 2 family. MatK subfamily.</text>
</comment>
<accession>Q70D38</accession>
<name>MATK_NICAC</name>
<gene>
    <name evidence="1" type="primary">matK</name>
</gene>
<dbReference type="EMBL" id="AJ585849">
    <property type="protein sequence ID" value="CAE51490.1"/>
    <property type="molecule type" value="Genomic_DNA"/>
</dbReference>
<dbReference type="GO" id="GO:0009507">
    <property type="term" value="C:chloroplast"/>
    <property type="evidence" value="ECO:0007669"/>
    <property type="project" value="UniProtKB-SubCell"/>
</dbReference>
<dbReference type="GO" id="GO:0003723">
    <property type="term" value="F:RNA binding"/>
    <property type="evidence" value="ECO:0007669"/>
    <property type="project" value="UniProtKB-KW"/>
</dbReference>
<dbReference type="GO" id="GO:0006397">
    <property type="term" value="P:mRNA processing"/>
    <property type="evidence" value="ECO:0007669"/>
    <property type="project" value="UniProtKB-KW"/>
</dbReference>
<dbReference type="GO" id="GO:0008380">
    <property type="term" value="P:RNA splicing"/>
    <property type="evidence" value="ECO:0007669"/>
    <property type="project" value="UniProtKB-UniRule"/>
</dbReference>
<dbReference type="GO" id="GO:0008033">
    <property type="term" value="P:tRNA processing"/>
    <property type="evidence" value="ECO:0007669"/>
    <property type="project" value="UniProtKB-KW"/>
</dbReference>
<dbReference type="HAMAP" id="MF_01390">
    <property type="entry name" value="MatK"/>
    <property type="match status" value="1"/>
</dbReference>
<dbReference type="InterPro" id="IPR024937">
    <property type="entry name" value="Domain_X"/>
</dbReference>
<dbReference type="InterPro" id="IPR002866">
    <property type="entry name" value="Maturase_MatK"/>
</dbReference>
<dbReference type="InterPro" id="IPR024942">
    <property type="entry name" value="Maturase_MatK_N"/>
</dbReference>
<dbReference type="PANTHER" id="PTHR34811">
    <property type="entry name" value="MATURASE K"/>
    <property type="match status" value="1"/>
</dbReference>
<dbReference type="PANTHER" id="PTHR34811:SF1">
    <property type="entry name" value="MATURASE K"/>
    <property type="match status" value="1"/>
</dbReference>
<dbReference type="Pfam" id="PF01348">
    <property type="entry name" value="Intron_maturas2"/>
    <property type="match status" value="1"/>
</dbReference>
<dbReference type="Pfam" id="PF01824">
    <property type="entry name" value="MatK_N"/>
    <property type="match status" value="1"/>
</dbReference>
<keyword id="KW-0150">Chloroplast</keyword>
<keyword id="KW-0507">mRNA processing</keyword>
<keyword id="KW-0934">Plastid</keyword>
<keyword id="KW-0694">RNA-binding</keyword>
<keyword id="KW-0819">tRNA processing</keyword>
<evidence type="ECO:0000255" key="1">
    <source>
        <dbReference type="HAMAP-Rule" id="MF_01390"/>
    </source>
</evidence>
<reference key="1">
    <citation type="journal article" date="2004" name="Mol. Phylogenet. Evol.">
        <title>Phylogenetic relationships in Nicotiana (Solanaceae) inferred from multiple plastid regions.</title>
        <authorList>
            <person name="Clarkson J.J."/>
            <person name="Knapp S."/>
            <person name="Garcia V.F."/>
            <person name="Olmstead R.G."/>
            <person name="Leitch A.R."/>
            <person name="Chase M.W."/>
        </authorList>
    </citation>
    <scope>NUCLEOTIDE SEQUENCE [GENOMIC DNA]</scope>
</reference>
<proteinExistence type="inferred from homology"/>
<geneLocation type="chloroplast"/>
<organism>
    <name type="scientific">Nicotiana acuminata</name>
    <name type="common">Acuminate tobacco</name>
    <dbReference type="NCBI Taxonomy" id="4086"/>
    <lineage>
        <taxon>Eukaryota</taxon>
        <taxon>Viridiplantae</taxon>
        <taxon>Streptophyta</taxon>
        <taxon>Embryophyta</taxon>
        <taxon>Tracheophyta</taxon>
        <taxon>Spermatophyta</taxon>
        <taxon>Magnoliopsida</taxon>
        <taxon>eudicotyledons</taxon>
        <taxon>Gunneridae</taxon>
        <taxon>Pentapetalae</taxon>
        <taxon>asterids</taxon>
        <taxon>lamiids</taxon>
        <taxon>Solanales</taxon>
        <taxon>Solanaceae</taxon>
        <taxon>Nicotianoideae</taxon>
        <taxon>Nicotianeae</taxon>
        <taxon>Nicotiana</taxon>
    </lineage>
</organism>
<feature type="chain" id="PRO_0000143535" description="Maturase K">
    <location>
        <begin position="1"/>
        <end position="509"/>
    </location>
</feature>
<protein>
    <recommendedName>
        <fullName evidence="1">Maturase K</fullName>
    </recommendedName>
    <alternativeName>
        <fullName evidence="1">Intron maturase</fullName>
    </alternativeName>
</protein>
<sequence length="509" mass="60274">MEEIQRYLQPDRSQQHNFLYPLIFQEYIYALAHDHGLNRNRSILLENPGYNNKLSFLIVKRLITRMYQQNHFLISTNDSNKNSFLGCNKSLYSQMISEGFAFIVEIPFSLRLISSLSSFEGKKIFKSHNLRSIHSTFPFLEDNFSHLNYVLDILIPYPVHLEILVQTLRYWVKDASSLHLLRFFLHEYWNLNSLITSKKPGYSFSKKNQRFFFFLYNSYVYECESTFVFLRNQSSHLRSTSFGALLERIYFYGKIERLVEVFAKDFQVTLWLFKDPFMHYVRYQGKSILASKGTFLLMNKWKFYLVNFWQCHFYLCFHTGRIHINQLSNHSRDFMGYLSSVRLNPSMVRSQMLENSFLINNAIKKFDTLVPIIPLIGSLAKGNFCTVLGHPISKPVWSDLSDSDIIDRFGRICRNLFHYYSGSSKKKTLYRIKYILRLSCARTLARKHKSTVRTFLKRSGSELLEEFLTSEEQVLSLTFPRASSSLWGVYRSRIWYLDIFCINDLANYQ</sequence>